<protein>
    <recommendedName>
        <fullName>EMBRYO SURROUNDING FACTOR 1-like protein 10</fullName>
    </recommendedName>
</protein>
<sequence length="82" mass="9270">MSSLYFAILCLFMIFLVPLHEFGNAQGSEAELQLDPSMCLRVECAKHRNQKWCFCCAGLPRTCFLDKRGCTSVCKRESPSMA</sequence>
<reference key="1">
    <citation type="journal article" date="1998" name="DNA Res.">
        <title>Structural analysis of Arabidopsis thaliana chromosome 5. VI. Sequence features of the regions of 1,367,185 bp covered by 19 physically assigned P1 and TAC clones.</title>
        <authorList>
            <person name="Kotani H."/>
            <person name="Nakamura Y."/>
            <person name="Sato S."/>
            <person name="Asamizu E."/>
            <person name="Kaneko T."/>
            <person name="Miyajima N."/>
            <person name="Tabata S."/>
        </authorList>
    </citation>
    <scope>NUCLEOTIDE SEQUENCE [LARGE SCALE GENOMIC DNA]</scope>
    <source>
        <strain>cv. Columbia</strain>
    </source>
</reference>
<reference key="2">
    <citation type="journal article" date="2017" name="Plant J.">
        <title>Araport11: a complete reannotation of the Arabidopsis thaliana reference genome.</title>
        <authorList>
            <person name="Cheng C.Y."/>
            <person name="Krishnakumar V."/>
            <person name="Chan A.P."/>
            <person name="Thibaud-Nissen F."/>
            <person name="Schobel S."/>
            <person name="Town C.D."/>
        </authorList>
    </citation>
    <scope>GENOME REANNOTATION</scope>
    <source>
        <strain>cv. Columbia</strain>
    </source>
</reference>
<reference key="3">
    <citation type="journal article" date="2006" name="Plant Biotechnol. J.">
        <title>Simultaneous high-throughput recombinational cloning of open reading frames in closed and open configurations.</title>
        <authorList>
            <person name="Underwood B.A."/>
            <person name="Vanderhaeghen R."/>
            <person name="Whitford R."/>
            <person name="Town C.D."/>
            <person name="Hilson P."/>
        </authorList>
    </citation>
    <scope>NUCLEOTIDE SEQUENCE [LARGE SCALE MRNA]</scope>
    <source>
        <strain>cv. Columbia</strain>
    </source>
</reference>
<reference key="4">
    <citation type="submission" date="2002-03" db="EMBL/GenBank/DDBJ databases">
        <title>Full-length cDNA from Arabidopsis thaliana.</title>
        <authorList>
            <person name="Brover V.V."/>
            <person name="Troukhan M.E."/>
            <person name="Alexandrov N.A."/>
            <person name="Lu Y.-P."/>
            <person name="Flavell R.B."/>
            <person name="Feldmann K.A."/>
        </authorList>
    </citation>
    <scope>NUCLEOTIDE SEQUENCE [LARGE SCALE MRNA] OF 13-82</scope>
</reference>
<reference key="5">
    <citation type="journal article" date="2014" name="Science">
        <title>Central cell-derived peptides regulate early embryo patterning in flowering plants.</title>
        <authorList>
            <person name="Costa L.M."/>
            <person name="Marshall E."/>
            <person name="Tesfaye M."/>
            <person name="Silverstein K.A."/>
            <person name="Mori M."/>
            <person name="Umetsu Y."/>
            <person name="Otterbach S.L."/>
            <person name="Papareddy R."/>
            <person name="Dickinson H.G."/>
            <person name="Boutiller K."/>
            <person name="VandenBosch K.A."/>
            <person name="Ohki S."/>
            <person name="Gutierrez-Marcos J.F."/>
        </authorList>
    </citation>
    <scope>IDENTIFICATION</scope>
    <scope>TISSUE SPECIFICITY</scope>
</reference>
<comment type="tissue specificity">
    <text evidence="3">Expressed in stems, leaves and flowers.</text>
</comment>
<comment type="similarity">
    <text evidence="4">Belongs to the MEG family.</text>
</comment>
<comment type="sequence caution" evidence="4">
    <conflict type="erroneous termination">
        <sequence resource="EMBL-CDS" id="ABK28771"/>
    </conflict>
    <text>Extended C-terminus.</text>
</comment>
<proteinExistence type="evidence at transcript level"/>
<name>ESFLA_ARATH</name>
<dbReference type="EMBL" id="AB012239">
    <property type="status" value="NOT_ANNOTATED_CDS"/>
    <property type="molecule type" value="Genomic_DNA"/>
</dbReference>
<dbReference type="EMBL" id="CP002688">
    <property type="protein sequence ID" value="AED97496.1"/>
    <property type="molecule type" value="Genomic_DNA"/>
</dbReference>
<dbReference type="EMBL" id="DQ447100">
    <property type="protein sequence ID" value="ABE66268.1"/>
    <property type="molecule type" value="mRNA"/>
</dbReference>
<dbReference type="EMBL" id="DQ653387">
    <property type="protein sequence ID" value="ABK28771.1"/>
    <property type="status" value="ALT_SEQ"/>
    <property type="molecule type" value="mRNA"/>
</dbReference>
<dbReference type="EMBL" id="AY085978">
    <property type="protein sequence ID" value="AAM63188.1"/>
    <property type="molecule type" value="mRNA"/>
</dbReference>
<dbReference type="RefSeq" id="NP_568936.1">
    <property type="nucleotide sequence ID" value="NM_125554.2"/>
</dbReference>
<dbReference type="STRING" id="3702.Q1PDG8"/>
<dbReference type="PaxDb" id="3702-AT5G61605.1"/>
<dbReference type="ProteomicsDB" id="220586"/>
<dbReference type="EnsemblPlants" id="AT5G61605.1">
    <property type="protein sequence ID" value="AT5G61605.1"/>
    <property type="gene ID" value="AT5G61605"/>
</dbReference>
<dbReference type="GeneID" id="836282"/>
<dbReference type="Gramene" id="AT5G61605.1">
    <property type="protein sequence ID" value="AT5G61605.1"/>
    <property type="gene ID" value="AT5G61605"/>
</dbReference>
<dbReference type="KEGG" id="ath:AT5G61605"/>
<dbReference type="Araport" id="AT5G61605"/>
<dbReference type="TAIR" id="AT5G61605">
    <property type="gene designation" value="PCP-BALPHA"/>
</dbReference>
<dbReference type="HOGENOM" id="CLU_2561407_0_0_1"/>
<dbReference type="InParanoid" id="Q1PDG8"/>
<dbReference type="OMA" id="VECAKHR"/>
<dbReference type="PhylomeDB" id="Q1PDG8"/>
<dbReference type="PRO" id="PR:Q1PDG8"/>
<dbReference type="Proteomes" id="UP000006548">
    <property type="component" value="Chromosome 5"/>
</dbReference>
<dbReference type="ExpressionAtlas" id="Q1PDG8">
    <property type="expression patterns" value="baseline and differential"/>
</dbReference>
<dbReference type="GO" id="GO:0140301">
    <property type="term" value="P:pollen-stigma interaction"/>
    <property type="evidence" value="ECO:0000316"/>
    <property type="project" value="TAIR"/>
</dbReference>
<gene>
    <name type="primary">ESFL10</name>
    <name type="ordered locus">At5g61605</name>
    <name type="ORF">K11J9</name>
</gene>
<organism>
    <name type="scientific">Arabidopsis thaliana</name>
    <name type="common">Mouse-ear cress</name>
    <dbReference type="NCBI Taxonomy" id="3702"/>
    <lineage>
        <taxon>Eukaryota</taxon>
        <taxon>Viridiplantae</taxon>
        <taxon>Streptophyta</taxon>
        <taxon>Embryophyta</taxon>
        <taxon>Tracheophyta</taxon>
        <taxon>Spermatophyta</taxon>
        <taxon>Magnoliopsida</taxon>
        <taxon>eudicotyledons</taxon>
        <taxon>Gunneridae</taxon>
        <taxon>Pentapetalae</taxon>
        <taxon>rosids</taxon>
        <taxon>malvids</taxon>
        <taxon>Brassicales</taxon>
        <taxon>Brassicaceae</taxon>
        <taxon>Camelineae</taxon>
        <taxon>Arabidopsis</taxon>
    </lineage>
</organism>
<accession>Q1PDG8</accession>
<accession>A0MFR0</accession>
<accession>Q8LDJ4</accession>
<keyword id="KW-1015">Disulfide bond</keyword>
<keyword id="KW-1185">Reference proteome</keyword>
<keyword id="KW-0732">Signal</keyword>
<evidence type="ECO:0000250" key="1"/>
<evidence type="ECO:0000255" key="2"/>
<evidence type="ECO:0000269" key="3">
    <source>
    </source>
</evidence>
<evidence type="ECO:0000305" key="4"/>
<feature type="signal peptide" evidence="2">
    <location>
        <begin position="1"/>
        <end position="22"/>
    </location>
</feature>
<feature type="chain" id="PRO_0000430071" description="EMBRYO SURROUNDING FACTOR 1-like protein 10">
    <location>
        <begin position="23"/>
        <end position="82"/>
    </location>
</feature>
<feature type="disulfide bond" evidence="1">
    <location>
        <begin position="39"/>
        <end position="55"/>
    </location>
</feature>
<feature type="disulfide bond" evidence="1">
    <location>
        <begin position="44"/>
        <end position="74"/>
    </location>
</feature>
<feature type="disulfide bond" evidence="1">
    <location>
        <begin position="53"/>
        <end position="70"/>
    </location>
</feature>
<feature type="disulfide bond" evidence="1">
    <location>
        <begin position="56"/>
        <end position="63"/>
    </location>
</feature>